<evidence type="ECO:0000255" key="1">
    <source>
        <dbReference type="HAMAP-Rule" id="MF_00391"/>
    </source>
</evidence>
<evidence type="ECO:0000256" key="2">
    <source>
        <dbReference type="SAM" id="MobiDB-lite"/>
    </source>
</evidence>
<evidence type="ECO:0000305" key="3"/>
<evidence type="ECO:0007829" key="4">
    <source>
        <dbReference type="PDB" id="6WU9"/>
    </source>
</evidence>
<proteinExistence type="evidence at protein level"/>
<name>RL34_ENTFA</name>
<dbReference type="EMBL" id="AE016830">
    <property type="protein sequence ID" value="AAO82998.1"/>
    <property type="molecule type" value="Genomic_DNA"/>
</dbReference>
<dbReference type="RefSeq" id="NP_816928.1">
    <property type="nucleotide sequence ID" value="NC_004668.1"/>
</dbReference>
<dbReference type="RefSeq" id="WP_002356012.1">
    <property type="nucleotide sequence ID" value="NZ_KE136524.1"/>
</dbReference>
<dbReference type="PDB" id="6WU9">
    <property type="method" value="EM"/>
    <property type="resolution" value="2.90 A"/>
    <property type="chains" value="4=1-44"/>
</dbReference>
<dbReference type="PDB" id="7P7Q">
    <property type="method" value="EM"/>
    <property type="resolution" value="2.40 A"/>
    <property type="chains" value="6=1-44"/>
</dbReference>
<dbReference type="PDB" id="7P7R">
    <property type="method" value="EM"/>
    <property type="resolution" value="2.90 A"/>
    <property type="chains" value="6=1-44"/>
</dbReference>
<dbReference type="PDBsum" id="6WU9"/>
<dbReference type="PDBsum" id="7P7Q"/>
<dbReference type="PDBsum" id="7P7R"/>
<dbReference type="EMDB" id="EMD-13241"/>
<dbReference type="EMDB" id="EMD-13242"/>
<dbReference type="SMR" id="Q82YU9"/>
<dbReference type="STRING" id="226185.EF_3333"/>
<dbReference type="EnsemblBacteria" id="AAO82998">
    <property type="protein sequence ID" value="AAO82998"/>
    <property type="gene ID" value="EF_3333"/>
</dbReference>
<dbReference type="GeneID" id="93222661"/>
<dbReference type="KEGG" id="efa:EF3333"/>
<dbReference type="PATRIC" id="fig|226185.45.peg.254"/>
<dbReference type="eggNOG" id="COG0230">
    <property type="taxonomic scope" value="Bacteria"/>
</dbReference>
<dbReference type="HOGENOM" id="CLU_129938_2_0_9"/>
<dbReference type="Proteomes" id="UP000001415">
    <property type="component" value="Chromosome"/>
</dbReference>
<dbReference type="GO" id="GO:1990904">
    <property type="term" value="C:ribonucleoprotein complex"/>
    <property type="evidence" value="ECO:0007669"/>
    <property type="project" value="UniProtKB-KW"/>
</dbReference>
<dbReference type="GO" id="GO:0005840">
    <property type="term" value="C:ribosome"/>
    <property type="evidence" value="ECO:0007669"/>
    <property type="project" value="UniProtKB-KW"/>
</dbReference>
<dbReference type="GO" id="GO:0003735">
    <property type="term" value="F:structural constituent of ribosome"/>
    <property type="evidence" value="ECO:0007669"/>
    <property type="project" value="InterPro"/>
</dbReference>
<dbReference type="GO" id="GO:0006412">
    <property type="term" value="P:translation"/>
    <property type="evidence" value="ECO:0007669"/>
    <property type="project" value="UniProtKB-UniRule"/>
</dbReference>
<dbReference type="FunFam" id="1.10.287.3980:FF:000001">
    <property type="entry name" value="Mitochondrial ribosomal protein L34"/>
    <property type="match status" value="1"/>
</dbReference>
<dbReference type="Gene3D" id="1.10.287.3980">
    <property type="match status" value="1"/>
</dbReference>
<dbReference type="HAMAP" id="MF_00391">
    <property type="entry name" value="Ribosomal_bL34"/>
    <property type="match status" value="1"/>
</dbReference>
<dbReference type="InterPro" id="IPR000271">
    <property type="entry name" value="Ribosomal_bL34"/>
</dbReference>
<dbReference type="InterPro" id="IPR020939">
    <property type="entry name" value="Ribosomal_bL34_CS"/>
</dbReference>
<dbReference type="NCBIfam" id="TIGR01030">
    <property type="entry name" value="rpmH_bact"/>
    <property type="match status" value="1"/>
</dbReference>
<dbReference type="PANTHER" id="PTHR14503:SF4">
    <property type="entry name" value="LARGE RIBOSOMAL SUBUNIT PROTEIN BL34M"/>
    <property type="match status" value="1"/>
</dbReference>
<dbReference type="PANTHER" id="PTHR14503">
    <property type="entry name" value="MITOCHONDRIAL RIBOSOMAL PROTEIN 34 FAMILY MEMBER"/>
    <property type="match status" value="1"/>
</dbReference>
<dbReference type="Pfam" id="PF00468">
    <property type="entry name" value="Ribosomal_L34"/>
    <property type="match status" value="1"/>
</dbReference>
<dbReference type="PROSITE" id="PS00784">
    <property type="entry name" value="RIBOSOMAL_L34"/>
    <property type="match status" value="1"/>
</dbReference>
<accession>Q82YU9</accession>
<protein>
    <recommendedName>
        <fullName evidence="1">Large ribosomal subunit protein bL34</fullName>
    </recommendedName>
    <alternativeName>
        <fullName evidence="3">50S ribosomal protein L34</fullName>
    </alternativeName>
</protein>
<gene>
    <name evidence="1" type="primary">rpmH</name>
    <name type="ordered locus">EF_3333</name>
</gene>
<keyword id="KW-0002">3D-structure</keyword>
<keyword id="KW-1185">Reference proteome</keyword>
<keyword id="KW-0687">Ribonucleoprotein</keyword>
<keyword id="KW-0689">Ribosomal protein</keyword>
<reference key="1">
    <citation type="journal article" date="2003" name="Science">
        <title>Role of mobile DNA in the evolution of vancomycin-resistant Enterococcus faecalis.</title>
        <authorList>
            <person name="Paulsen I.T."/>
            <person name="Banerjei L."/>
            <person name="Myers G.S.A."/>
            <person name="Nelson K.E."/>
            <person name="Seshadri R."/>
            <person name="Read T.D."/>
            <person name="Fouts D.E."/>
            <person name="Eisen J.A."/>
            <person name="Gill S.R."/>
            <person name="Heidelberg J.F."/>
            <person name="Tettelin H."/>
            <person name="Dodson R.J."/>
            <person name="Umayam L.A."/>
            <person name="Brinkac L.M."/>
            <person name="Beanan M.J."/>
            <person name="Daugherty S.C."/>
            <person name="DeBoy R.T."/>
            <person name="Durkin S.A."/>
            <person name="Kolonay J.F."/>
            <person name="Madupu R."/>
            <person name="Nelson W.C."/>
            <person name="Vamathevan J.J."/>
            <person name="Tran B."/>
            <person name="Upton J."/>
            <person name="Hansen T."/>
            <person name="Shetty J."/>
            <person name="Khouri H.M."/>
            <person name="Utterback T.R."/>
            <person name="Radune D."/>
            <person name="Ketchum K.A."/>
            <person name="Dougherty B.A."/>
            <person name="Fraser C.M."/>
        </authorList>
    </citation>
    <scope>NUCLEOTIDE SEQUENCE [LARGE SCALE GENOMIC DNA]</scope>
    <source>
        <strain>ATCC 700802 / V583</strain>
    </source>
</reference>
<sequence length="44" mass="5353">MKRTYQPNKRKRQKVHGFRKRMSTKNGRRVLASRRRKGRKVISA</sequence>
<organism>
    <name type="scientific">Enterococcus faecalis (strain ATCC 700802 / V583)</name>
    <dbReference type="NCBI Taxonomy" id="226185"/>
    <lineage>
        <taxon>Bacteria</taxon>
        <taxon>Bacillati</taxon>
        <taxon>Bacillota</taxon>
        <taxon>Bacilli</taxon>
        <taxon>Lactobacillales</taxon>
        <taxon>Enterococcaceae</taxon>
        <taxon>Enterococcus</taxon>
    </lineage>
</organism>
<feature type="chain" id="PRO_0000187382" description="Large ribosomal subunit protein bL34">
    <location>
        <begin position="1"/>
        <end position="44"/>
    </location>
</feature>
<feature type="region of interest" description="Disordered" evidence="2">
    <location>
        <begin position="1"/>
        <end position="44"/>
    </location>
</feature>
<feature type="helix" evidence="4">
    <location>
        <begin position="9"/>
        <end position="16"/>
    </location>
</feature>
<feature type="helix" evidence="4">
    <location>
        <begin position="18"/>
        <end position="22"/>
    </location>
</feature>
<feature type="helix" evidence="4">
    <location>
        <begin position="25"/>
        <end position="35"/>
    </location>
</feature>
<feature type="turn" evidence="4">
    <location>
        <begin position="36"/>
        <end position="38"/>
    </location>
</feature>
<comment type="similarity">
    <text evidence="1">Belongs to the bacterial ribosomal protein bL34 family.</text>
</comment>